<feature type="chain" id="PRO_0000121886" description="tRNA pseudouridine synthase B">
    <location>
        <begin position="1"/>
        <end position="320"/>
    </location>
</feature>
<feature type="region of interest" description="Disordered" evidence="2">
    <location>
        <begin position="116"/>
        <end position="136"/>
    </location>
</feature>
<feature type="region of interest" description="Disordered" evidence="2">
    <location>
        <begin position="259"/>
        <end position="284"/>
    </location>
</feature>
<feature type="compositionally biased region" description="Basic and acidic residues" evidence="2">
    <location>
        <begin position="125"/>
        <end position="136"/>
    </location>
</feature>
<feature type="compositionally biased region" description="Polar residues" evidence="2">
    <location>
        <begin position="270"/>
        <end position="284"/>
    </location>
</feature>
<feature type="active site" description="Nucleophile" evidence="1">
    <location>
        <position position="41"/>
    </location>
</feature>
<keyword id="KW-0413">Isomerase</keyword>
<keyword id="KW-1185">Reference proteome</keyword>
<keyword id="KW-0819">tRNA processing</keyword>
<name>TRUB_PROMM</name>
<accession>P59881</accession>
<dbReference type="EC" id="5.4.99.25" evidence="1"/>
<dbReference type="EMBL" id="BX548175">
    <property type="protein sequence ID" value="CAE21597.1"/>
    <property type="molecule type" value="Genomic_DNA"/>
</dbReference>
<dbReference type="RefSeq" id="WP_011130790.1">
    <property type="nucleotide sequence ID" value="NC_005071.1"/>
</dbReference>
<dbReference type="SMR" id="P59881"/>
<dbReference type="KEGG" id="pmt:PMT_1422"/>
<dbReference type="eggNOG" id="COG0130">
    <property type="taxonomic scope" value="Bacteria"/>
</dbReference>
<dbReference type="HOGENOM" id="CLU_032087_0_0_3"/>
<dbReference type="OrthoDB" id="9802309at2"/>
<dbReference type="Proteomes" id="UP000001423">
    <property type="component" value="Chromosome"/>
</dbReference>
<dbReference type="GO" id="GO:0003723">
    <property type="term" value="F:RNA binding"/>
    <property type="evidence" value="ECO:0007669"/>
    <property type="project" value="InterPro"/>
</dbReference>
<dbReference type="GO" id="GO:0160148">
    <property type="term" value="F:tRNA pseudouridine(55) synthase activity"/>
    <property type="evidence" value="ECO:0007669"/>
    <property type="project" value="UniProtKB-EC"/>
</dbReference>
<dbReference type="GO" id="GO:1990481">
    <property type="term" value="P:mRNA pseudouridine synthesis"/>
    <property type="evidence" value="ECO:0007669"/>
    <property type="project" value="TreeGrafter"/>
</dbReference>
<dbReference type="GO" id="GO:0031119">
    <property type="term" value="P:tRNA pseudouridine synthesis"/>
    <property type="evidence" value="ECO:0007669"/>
    <property type="project" value="UniProtKB-UniRule"/>
</dbReference>
<dbReference type="CDD" id="cd02573">
    <property type="entry name" value="PseudoU_synth_EcTruB"/>
    <property type="match status" value="1"/>
</dbReference>
<dbReference type="Gene3D" id="3.30.2350.10">
    <property type="entry name" value="Pseudouridine synthase"/>
    <property type="match status" value="1"/>
</dbReference>
<dbReference type="HAMAP" id="MF_01080">
    <property type="entry name" value="TruB_bact"/>
    <property type="match status" value="1"/>
</dbReference>
<dbReference type="InterPro" id="IPR020103">
    <property type="entry name" value="PsdUridine_synth_cat_dom_sf"/>
</dbReference>
<dbReference type="InterPro" id="IPR002501">
    <property type="entry name" value="PsdUridine_synth_N"/>
</dbReference>
<dbReference type="InterPro" id="IPR014780">
    <property type="entry name" value="tRNA_psdUridine_synth_TruB"/>
</dbReference>
<dbReference type="NCBIfam" id="TIGR00431">
    <property type="entry name" value="TruB"/>
    <property type="match status" value="1"/>
</dbReference>
<dbReference type="PANTHER" id="PTHR13767:SF2">
    <property type="entry name" value="PSEUDOURIDYLATE SYNTHASE TRUB1"/>
    <property type="match status" value="1"/>
</dbReference>
<dbReference type="PANTHER" id="PTHR13767">
    <property type="entry name" value="TRNA-PSEUDOURIDINE SYNTHASE"/>
    <property type="match status" value="1"/>
</dbReference>
<dbReference type="Pfam" id="PF01509">
    <property type="entry name" value="TruB_N"/>
    <property type="match status" value="1"/>
</dbReference>
<dbReference type="SUPFAM" id="SSF55120">
    <property type="entry name" value="Pseudouridine synthase"/>
    <property type="match status" value="1"/>
</dbReference>
<proteinExistence type="inferred from homology"/>
<evidence type="ECO:0000255" key="1">
    <source>
        <dbReference type="HAMAP-Rule" id="MF_01080"/>
    </source>
</evidence>
<evidence type="ECO:0000256" key="2">
    <source>
        <dbReference type="SAM" id="MobiDB-lite"/>
    </source>
</evidence>
<reference key="1">
    <citation type="journal article" date="2003" name="Nature">
        <title>Genome divergence in two Prochlorococcus ecotypes reflects oceanic niche differentiation.</title>
        <authorList>
            <person name="Rocap G."/>
            <person name="Larimer F.W."/>
            <person name="Lamerdin J.E."/>
            <person name="Malfatti S."/>
            <person name="Chain P."/>
            <person name="Ahlgren N.A."/>
            <person name="Arellano A."/>
            <person name="Coleman M."/>
            <person name="Hauser L."/>
            <person name="Hess W.R."/>
            <person name="Johnson Z.I."/>
            <person name="Land M.L."/>
            <person name="Lindell D."/>
            <person name="Post A.F."/>
            <person name="Regala W."/>
            <person name="Shah M."/>
            <person name="Shaw S.L."/>
            <person name="Steglich C."/>
            <person name="Sullivan M.B."/>
            <person name="Ting C.S."/>
            <person name="Tolonen A."/>
            <person name="Webb E.A."/>
            <person name="Zinser E.R."/>
            <person name="Chisholm S.W."/>
        </authorList>
    </citation>
    <scope>NUCLEOTIDE SEQUENCE [LARGE SCALE GENOMIC DNA]</scope>
    <source>
        <strain>MIT 9313</strain>
    </source>
</reference>
<organism>
    <name type="scientific">Prochlorococcus marinus (strain MIT 9313)</name>
    <dbReference type="NCBI Taxonomy" id="74547"/>
    <lineage>
        <taxon>Bacteria</taxon>
        <taxon>Bacillati</taxon>
        <taxon>Cyanobacteriota</taxon>
        <taxon>Cyanophyceae</taxon>
        <taxon>Synechococcales</taxon>
        <taxon>Prochlorococcaceae</taxon>
        <taxon>Prochlorococcus</taxon>
    </lineage>
</organism>
<gene>
    <name evidence="1" type="primary">truB</name>
    <name type="ordered locus">PMT_1422</name>
</gene>
<protein>
    <recommendedName>
        <fullName evidence="1">tRNA pseudouridine synthase B</fullName>
        <ecNumber evidence="1">5.4.99.25</ecNumber>
    </recommendedName>
    <alternativeName>
        <fullName evidence="1">tRNA pseudouridine(55) synthase</fullName>
        <shortName evidence="1">Psi55 synthase</shortName>
    </alternativeName>
    <alternativeName>
        <fullName evidence="1">tRNA pseudouridylate synthase</fullName>
    </alternativeName>
    <alternativeName>
        <fullName evidence="1">tRNA-uridine isomerase</fullName>
    </alternativeName>
</protein>
<comment type="function">
    <text evidence="1">Responsible for synthesis of pseudouridine from uracil-55 in the psi GC loop of transfer RNAs.</text>
</comment>
<comment type="catalytic activity">
    <reaction evidence="1">
        <text>uridine(55) in tRNA = pseudouridine(55) in tRNA</text>
        <dbReference type="Rhea" id="RHEA:42532"/>
        <dbReference type="Rhea" id="RHEA-COMP:10101"/>
        <dbReference type="Rhea" id="RHEA-COMP:10102"/>
        <dbReference type="ChEBI" id="CHEBI:65314"/>
        <dbReference type="ChEBI" id="CHEBI:65315"/>
        <dbReference type="EC" id="5.4.99.25"/>
    </reaction>
</comment>
<comment type="similarity">
    <text evidence="1">Belongs to the pseudouridine synthase TruB family. Type 1 subfamily.</text>
</comment>
<sequence>MTVPFGFVVIDKPAGITSHDCVSRMRRVFGIKRVGHGGTLDPAVTGVLPIALGHATRLLPYLPGAKSYRGSIQLGQRTSSDDQQGDLISKQAWPELNTAEIEAYLEPFRGRIQQRPPQVSAVHVQGERAHARARRGETMEIPARTITIDRLQLLNWNQQLGQIDFNVHCSSGTYIRSLARDLGELIGCGACLGWLKRTQALGFHEQQAVPLPDRDNPALTTPPAVLPPLTALAHLPRLQLNEEEQESWSCGRRITAHQDQCQPAPKPLASDQQESAPNQTDPSANKSMLVVIDCRGEVAGMAYWEDNATVKPKVVFNAQG</sequence>